<gene>
    <name type="ordered locus">SAOUHSC_01721</name>
</gene>
<name>Y1721_STAA8</name>
<reference key="1">
    <citation type="book" date="2006" name="Gram positive pathogens, 2nd edition">
        <title>The Staphylococcus aureus NCTC 8325 genome.</title>
        <editorList>
            <person name="Fischetti V."/>
            <person name="Novick R."/>
            <person name="Ferretti J."/>
            <person name="Portnoy D."/>
            <person name="Rood J."/>
        </editorList>
        <authorList>
            <person name="Gillaspy A.F."/>
            <person name="Worrell V."/>
            <person name="Orvis J."/>
            <person name="Roe B.A."/>
            <person name="Dyer D.W."/>
            <person name="Iandolo J.J."/>
        </authorList>
    </citation>
    <scope>NUCLEOTIDE SEQUENCE [LARGE SCALE GENOMIC DNA]</scope>
    <source>
        <strain>NCTC 8325 / PS 47</strain>
    </source>
</reference>
<feature type="chain" id="PRO_0000245635" description="UPF0297 protein SAOUHSC_01721">
    <location>
        <begin position="1"/>
        <end position="86"/>
    </location>
</feature>
<sequence>MENFDKTMKFDYEELPTQDVRDVLNNVYRTLDERGYNAVNQIVGYLLSGDPAYIPRQNEARNQIRHIDRDVIMEELVSYYLKEQNK</sequence>
<keyword id="KW-1185">Reference proteome</keyword>
<protein>
    <recommendedName>
        <fullName evidence="1">UPF0297 protein SAOUHSC_01721</fullName>
    </recommendedName>
</protein>
<dbReference type="EMBL" id="CP000253">
    <property type="protein sequence ID" value="ABD30794.1"/>
    <property type="molecule type" value="Genomic_DNA"/>
</dbReference>
<dbReference type="RefSeq" id="WP_000426912.1">
    <property type="nucleotide sequence ID" value="NZ_LS483365.1"/>
</dbReference>
<dbReference type="RefSeq" id="YP_500230.1">
    <property type="nucleotide sequence ID" value="NC_007795.1"/>
</dbReference>
<dbReference type="SMR" id="Q2FXW0"/>
<dbReference type="STRING" id="93061.SAOUHSC_01721"/>
<dbReference type="PaxDb" id="1280-SAXN108_1645"/>
<dbReference type="GeneID" id="3921071"/>
<dbReference type="KEGG" id="sao:SAOUHSC_01721"/>
<dbReference type="PATRIC" id="fig|93061.5.peg.1569"/>
<dbReference type="eggNOG" id="COG4472">
    <property type="taxonomic scope" value="Bacteria"/>
</dbReference>
<dbReference type="HOGENOM" id="CLU_162466_0_0_9"/>
<dbReference type="OrthoDB" id="9796303at2"/>
<dbReference type="PRO" id="PR:Q2FXW0"/>
<dbReference type="Proteomes" id="UP000008816">
    <property type="component" value="Chromosome"/>
</dbReference>
<dbReference type="HAMAP" id="MF_01507">
    <property type="entry name" value="UPF0297"/>
    <property type="match status" value="1"/>
</dbReference>
<dbReference type="InterPro" id="IPR009309">
    <property type="entry name" value="IreB"/>
</dbReference>
<dbReference type="NCBIfam" id="NF003997">
    <property type="entry name" value="PRK05473.1"/>
    <property type="match status" value="1"/>
</dbReference>
<dbReference type="PANTHER" id="PTHR40067">
    <property type="entry name" value="UPF0297 PROTEIN YRZL"/>
    <property type="match status" value="1"/>
</dbReference>
<dbReference type="PANTHER" id="PTHR40067:SF1">
    <property type="entry name" value="UPF0297 PROTEIN YRZL"/>
    <property type="match status" value="1"/>
</dbReference>
<dbReference type="Pfam" id="PF06135">
    <property type="entry name" value="IreB"/>
    <property type="match status" value="1"/>
</dbReference>
<dbReference type="PIRSF" id="PIRSF037258">
    <property type="entry name" value="DUF965_bac"/>
    <property type="match status" value="1"/>
</dbReference>
<proteinExistence type="inferred from homology"/>
<evidence type="ECO:0000255" key="1">
    <source>
        <dbReference type="HAMAP-Rule" id="MF_01507"/>
    </source>
</evidence>
<comment type="similarity">
    <text evidence="1">Belongs to the UPF0297 family.</text>
</comment>
<organism>
    <name type="scientific">Staphylococcus aureus (strain NCTC 8325 / PS 47)</name>
    <dbReference type="NCBI Taxonomy" id="93061"/>
    <lineage>
        <taxon>Bacteria</taxon>
        <taxon>Bacillati</taxon>
        <taxon>Bacillota</taxon>
        <taxon>Bacilli</taxon>
        <taxon>Bacillales</taxon>
        <taxon>Staphylococcaceae</taxon>
        <taxon>Staphylococcus</taxon>
    </lineage>
</organism>
<accession>Q2FXW0</accession>